<keyword id="KW-0687">Ribonucleoprotein</keyword>
<keyword id="KW-0689">Ribosomal protein</keyword>
<keyword id="KW-0694">RNA-binding</keyword>
<keyword id="KW-0699">rRNA-binding</keyword>
<feature type="chain" id="PRO_1000141566" description="Large ribosomal subunit protein uL2">
    <location>
        <begin position="1"/>
        <end position="273"/>
    </location>
</feature>
<feature type="region of interest" description="Disordered" evidence="2">
    <location>
        <begin position="28"/>
        <end position="53"/>
    </location>
</feature>
<feature type="region of interest" description="Disordered" evidence="2">
    <location>
        <begin position="221"/>
        <end position="273"/>
    </location>
</feature>
<feature type="compositionally biased region" description="Low complexity" evidence="2">
    <location>
        <begin position="39"/>
        <end position="48"/>
    </location>
</feature>
<proteinExistence type="inferred from homology"/>
<sequence>MAVVKCKPTSPGRRHVVKVVNPELHKGKPFAPLLEKNSKSGGRNNNGRITTRHIGGGHKQAYRIVDFKRNKDGIPAVVERLEYDPNRSANIALVLYKDGERRYILAPKGLKAGDQIQSGVDAAIKAGNTLPMRNIPVGSTVHNVEMKPGKGGQLARSAGTYVQIVARDGAYVTLRLRSGEMRKVEADCRATLGEVGNAEHMLRVLGKAGAARWRGVRPTVRGTAMNPVDHPHGGGEGRNFGKHPVSPWGLQTKGKKTRSNKRTDKFIVRRRSK</sequence>
<reference key="1">
    <citation type="journal article" date="2008" name="PLoS Genet.">
        <title>Complete genome sequence of the N2-fixing broad host range endophyte Klebsiella pneumoniae 342 and virulence predictions verified in mice.</title>
        <authorList>
            <person name="Fouts D.E."/>
            <person name="Tyler H.L."/>
            <person name="DeBoy R.T."/>
            <person name="Daugherty S."/>
            <person name="Ren Q."/>
            <person name="Badger J.H."/>
            <person name="Durkin A.S."/>
            <person name="Huot H."/>
            <person name="Shrivastava S."/>
            <person name="Kothari S."/>
            <person name="Dodson R.J."/>
            <person name="Mohamoud Y."/>
            <person name="Khouri H."/>
            <person name="Roesch L.F.W."/>
            <person name="Krogfelt K.A."/>
            <person name="Struve C."/>
            <person name="Triplett E.W."/>
            <person name="Methe B.A."/>
        </authorList>
    </citation>
    <scope>NUCLEOTIDE SEQUENCE [LARGE SCALE GENOMIC DNA]</scope>
    <source>
        <strain>342</strain>
    </source>
</reference>
<comment type="function">
    <text evidence="1">One of the primary rRNA binding proteins. Required for association of the 30S and 50S subunits to form the 70S ribosome, for tRNA binding and peptide bond formation. It has been suggested to have peptidyltransferase activity; this is somewhat controversial. Makes several contacts with the 16S rRNA in the 70S ribosome.</text>
</comment>
<comment type="subunit">
    <text evidence="1">Part of the 50S ribosomal subunit. Forms a bridge to the 30S subunit in the 70S ribosome.</text>
</comment>
<comment type="similarity">
    <text evidence="1">Belongs to the universal ribosomal protein uL2 family.</text>
</comment>
<organism>
    <name type="scientific">Klebsiella pneumoniae (strain 342)</name>
    <dbReference type="NCBI Taxonomy" id="507522"/>
    <lineage>
        <taxon>Bacteria</taxon>
        <taxon>Pseudomonadati</taxon>
        <taxon>Pseudomonadota</taxon>
        <taxon>Gammaproteobacteria</taxon>
        <taxon>Enterobacterales</taxon>
        <taxon>Enterobacteriaceae</taxon>
        <taxon>Klebsiella/Raoultella group</taxon>
        <taxon>Klebsiella</taxon>
        <taxon>Klebsiella pneumoniae complex</taxon>
    </lineage>
</organism>
<evidence type="ECO:0000255" key="1">
    <source>
        <dbReference type="HAMAP-Rule" id="MF_01320"/>
    </source>
</evidence>
<evidence type="ECO:0000256" key="2">
    <source>
        <dbReference type="SAM" id="MobiDB-lite"/>
    </source>
</evidence>
<evidence type="ECO:0000305" key="3"/>
<gene>
    <name evidence="1" type="primary">rplB</name>
    <name type="ordered locus">KPK_0402</name>
</gene>
<dbReference type="EMBL" id="CP000964">
    <property type="protein sequence ID" value="ACI10051.1"/>
    <property type="molecule type" value="Genomic_DNA"/>
</dbReference>
<dbReference type="SMR" id="B5XN97"/>
<dbReference type="KEGG" id="kpe:KPK_0402"/>
<dbReference type="HOGENOM" id="CLU_036235_2_1_6"/>
<dbReference type="Proteomes" id="UP000001734">
    <property type="component" value="Chromosome"/>
</dbReference>
<dbReference type="GO" id="GO:0005829">
    <property type="term" value="C:cytosol"/>
    <property type="evidence" value="ECO:0007669"/>
    <property type="project" value="UniProtKB-ARBA"/>
</dbReference>
<dbReference type="GO" id="GO:0015934">
    <property type="term" value="C:large ribosomal subunit"/>
    <property type="evidence" value="ECO:0007669"/>
    <property type="project" value="InterPro"/>
</dbReference>
<dbReference type="GO" id="GO:0019843">
    <property type="term" value="F:rRNA binding"/>
    <property type="evidence" value="ECO:0007669"/>
    <property type="project" value="UniProtKB-UniRule"/>
</dbReference>
<dbReference type="GO" id="GO:0003735">
    <property type="term" value="F:structural constituent of ribosome"/>
    <property type="evidence" value="ECO:0007669"/>
    <property type="project" value="InterPro"/>
</dbReference>
<dbReference type="GO" id="GO:0016740">
    <property type="term" value="F:transferase activity"/>
    <property type="evidence" value="ECO:0007669"/>
    <property type="project" value="InterPro"/>
</dbReference>
<dbReference type="GO" id="GO:0002181">
    <property type="term" value="P:cytoplasmic translation"/>
    <property type="evidence" value="ECO:0007669"/>
    <property type="project" value="TreeGrafter"/>
</dbReference>
<dbReference type="FunFam" id="2.30.30.30:FF:000001">
    <property type="entry name" value="50S ribosomal protein L2"/>
    <property type="match status" value="1"/>
</dbReference>
<dbReference type="FunFam" id="2.40.50.140:FF:000003">
    <property type="entry name" value="50S ribosomal protein L2"/>
    <property type="match status" value="1"/>
</dbReference>
<dbReference type="FunFam" id="4.10.950.10:FF:000001">
    <property type="entry name" value="50S ribosomal protein L2"/>
    <property type="match status" value="1"/>
</dbReference>
<dbReference type="Gene3D" id="2.30.30.30">
    <property type="match status" value="1"/>
</dbReference>
<dbReference type="Gene3D" id="2.40.50.140">
    <property type="entry name" value="Nucleic acid-binding proteins"/>
    <property type="match status" value="1"/>
</dbReference>
<dbReference type="Gene3D" id="4.10.950.10">
    <property type="entry name" value="Ribosomal protein L2, domain 3"/>
    <property type="match status" value="1"/>
</dbReference>
<dbReference type="HAMAP" id="MF_01320_B">
    <property type="entry name" value="Ribosomal_uL2_B"/>
    <property type="match status" value="1"/>
</dbReference>
<dbReference type="InterPro" id="IPR012340">
    <property type="entry name" value="NA-bd_OB-fold"/>
</dbReference>
<dbReference type="InterPro" id="IPR014722">
    <property type="entry name" value="Rib_uL2_dom2"/>
</dbReference>
<dbReference type="InterPro" id="IPR002171">
    <property type="entry name" value="Ribosomal_uL2"/>
</dbReference>
<dbReference type="InterPro" id="IPR005880">
    <property type="entry name" value="Ribosomal_uL2_bac/org-type"/>
</dbReference>
<dbReference type="InterPro" id="IPR022669">
    <property type="entry name" value="Ribosomal_uL2_C"/>
</dbReference>
<dbReference type="InterPro" id="IPR022671">
    <property type="entry name" value="Ribosomal_uL2_CS"/>
</dbReference>
<dbReference type="InterPro" id="IPR014726">
    <property type="entry name" value="Ribosomal_uL2_dom3"/>
</dbReference>
<dbReference type="InterPro" id="IPR022666">
    <property type="entry name" value="Ribosomal_uL2_RNA-bd_dom"/>
</dbReference>
<dbReference type="InterPro" id="IPR008991">
    <property type="entry name" value="Translation_prot_SH3-like_sf"/>
</dbReference>
<dbReference type="NCBIfam" id="TIGR01171">
    <property type="entry name" value="rplB_bact"/>
    <property type="match status" value="1"/>
</dbReference>
<dbReference type="PANTHER" id="PTHR13691:SF5">
    <property type="entry name" value="LARGE RIBOSOMAL SUBUNIT PROTEIN UL2M"/>
    <property type="match status" value="1"/>
</dbReference>
<dbReference type="PANTHER" id="PTHR13691">
    <property type="entry name" value="RIBOSOMAL PROTEIN L2"/>
    <property type="match status" value="1"/>
</dbReference>
<dbReference type="Pfam" id="PF00181">
    <property type="entry name" value="Ribosomal_L2"/>
    <property type="match status" value="1"/>
</dbReference>
<dbReference type="Pfam" id="PF03947">
    <property type="entry name" value="Ribosomal_L2_C"/>
    <property type="match status" value="1"/>
</dbReference>
<dbReference type="PIRSF" id="PIRSF002158">
    <property type="entry name" value="Ribosomal_L2"/>
    <property type="match status" value="1"/>
</dbReference>
<dbReference type="SMART" id="SM01383">
    <property type="entry name" value="Ribosomal_L2"/>
    <property type="match status" value="1"/>
</dbReference>
<dbReference type="SMART" id="SM01382">
    <property type="entry name" value="Ribosomal_L2_C"/>
    <property type="match status" value="1"/>
</dbReference>
<dbReference type="SUPFAM" id="SSF50249">
    <property type="entry name" value="Nucleic acid-binding proteins"/>
    <property type="match status" value="1"/>
</dbReference>
<dbReference type="SUPFAM" id="SSF50104">
    <property type="entry name" value="Translation proteins SH3-like domain"/>
    <property type="match status" value="1"/>
</dbReference>
<dbReference type="PROSITE" id="PS00467">
    <property type="entry name" value="RIBOSOMAL_L2"/>
    <property type="match status" value="1"/>
</dbReference>
<protein>
    <recommendedName>
        <fullName evidence="1">Large ribosomal subunit protein uL2</fullName>
    </recommendedName>
    <alternativeName>
        <fullName evidence="3">50S ribosomal protein L2</fullName>
    </alternativeName>
</protein>
<name>RL2_KLEP3</name>
<accession>B5XN97</accession>